<organism>
    <name type="scientific">Danio rerio</name>
    <name type="common">Zebrafish</name>
    <name type="synonym">Brachydanio rerio</name>
    <dbReference type="NCBI Taxonomy" id="7955"/>
    <lineage>
        <taxon>Eukaryota</taxon>
        <taxon>Metazoa</taxon>
        <taxon>Chordata</taxon>
        <taxon>Craniata</taxon>
        <taxon>Vertebrata</taxon>
        <taxon>Euteleostomi</taxon>
        <taxon>Actinopterygii</taxon>
        <taxon>Neopterygii</taxon>
        <taxon>Teleostei</taxon>
        <taxon>Ostariophysi</taxon>
        <taxon>Cypriniformes</taxon>
        <taxon>Danionidae</taxon>
        <taxon>Danioninae</taxon>
        <taxon>Danio</taxon>
    </lineage>
</organism>
<comment type="function">
    <text evidence="1">Component of the FERRY complex (Five-subunit Endosomal Rab5 and RNA/ribosome intermediary). The FERRY complex directly interacts with mRNAs and RAB5A, and functions as a RAB5A effector involved in the localization and the distribution of specific mRNAs most likely by mediating their endosomal transport. The complex recruits mRNAs and ribosomes to early endosomes through direct mRNA-interaction.</text>
</comment>
<comment type="subunit">
    <text evidence="1">Homotetramer. Component of the FERRY complex.</text>
</comment>
<comment type="subcellular location">
    <subcellularLocation>
        <location evidence="1">Secreted</location>
    </subcellularLocation>
    <subcellularLocation>
        <location evidence="1">Early endosome</location>
    </subcellularLocation>
</comment>
<comment type="similarity">
    <text evidence="3">Belongs to the peptidase C56 family.</text>
</comment>
<dbReference type="EMBL" id="BC107609">
    <property type="protein sequence ID" value="AAI07610.1"/>
    <property type="molecule type" value="mRNA"/>
</dbReference>
<dbReference type="RefSeq" id="NP_001032195.1">
    <property type="nucleotide sequence ID" value="NM_001037118.1"/>
</dbReference>
<dbReference type="SMR" id="Q3B7H1"/>
<dbReference type="FunCoup" id="Q3B7H1">
    <property type="interactions" value="107"/>
</dbReference>
<dbReference type="STRING" id="7955.ENSDARP00000070141"/>
<dbReference type="PaxDb" id="7955-ENSDARP00000070141"/>
<dbReference type="GeneID" id="100148360"/>
<dbReference type="KEGG" id="dre:100148360"/>
<dbReference type="AGR" id="ZFIN:ZDB-GENE-051030-96"/>
<dbReference type="CTD" id="347862"/>
<dbReference type="ZFIN" id="ZDB-GENE-051030-96">
    <property type="gene designation" value="gatd1"/>
</dbReference>
<dbReference type="eggNOG" id="ENOG502QS6W">
    <property type="taxonomic scope" value="Eukaryota"/>
</dbReference>
<dbReference type="InParanoid" id="Q3B7H1"/>
<dbReference type="OrthoDB" id="543156at2759"/>
<dbReference type="PhylomeDB" id="Q3B7H1"/>
<dbReference type="PRO" id="PR:Q3B7H1"/>
<dbReference type="Proteomes" id="UP000000437">
    <property type="component" value="Chromosome 25"/>
</dbReference>
<dbReference type="GO" id="GO:0005737">
    <property type="term" value="C:cytoplasm"/>
    <property type="evidence" value="ECO:0000318"/>
    <property type="project" value="GO_Central"/>
</dbReference>
<dbReference type="GO" id="GO:0005769">
    <property type="term" value="C:early endosome"/>
    <property type="evidence" value="ECO:0007669"/>
    <property type="project" value="UniProtKB-SubCell"/>
</dbReference>
<dbReference type="GO" id="GO:0005576">
    <property type="term" value="C:extracellular region"/>
    <property type="evidence" value="ECO:0007669"/>
    <property type="project" value="UniProtKB-SubCell"/>
</dbReference>
<dbReference type="GO" id="GO:0019172">
    <property type="term" value="F:glyoxalase III activity"/>
    <property type="evidence" value="ECO:0000318"/>
    <property type="project" value="GO_Central"/>
</dbReference>
<dbReference type="GO" id="GO:0019243">
    <property type="term" value="P:methylglyoxal catabolic process to D-lactate via S-lactoyl-glutathione"/>
    <property type="evidence" value="ECO:0000318"/>
    <property type="project" value="GO_Central"/>
</dbReference>
<dbReference type="CDD" id="cd03141">
    <property type="entry name" value="GATase1_Hsp31_like"/>
    <property type="match status" value="1"/>
</dbReference>
<dbReference type="Gene3D" id="3.40.50.880">
    <property type="match status" value="1"/>
</dbReference>
<dbReference type="InterPro" id="IPR029062">
    <property type="entry name" value="Class_I_gatase-like"/>
</dbReference>
<dbReference type="InterPro" id="IPR050325">
    <property type="entry name" value="Prot/Nucl_acid_deglycase"/>
</dbReference>
<dbReference type="PANTHER" id="PTHR48094:SF18">
    <property type="entry name" value="GLUTAMINE AMIDOTRANSFERASE-LIKE CLASS 1 DOMAIN-CONTAINING PROTEIN 1"/>
    <property type="match status" value="1"/>
</dbReference>
<dbReference type="PANTHER" id="PTHR48094">
    <property type="entry name" value="PROTEIN/NUCLEIC ACID DEGLYCASE DJ-1-RELATED"/>
    <property type="match status" value="1"/>
</dbReference>
<dbReference type="SUPFAM" id="SSF52317">
    <property type="entry name" value="Class I glutamine amidotransferase-like"/>
    <property type="match status" value="1"/>
</dbReference>
<reference key="1">
    <citation type="submission" date="2005-10" db="EMBL/GenBank/DDBJ databases">
        <authorList>
            <consortium name="NIH - Zebrafish Gene Collection (ZGC) project"/>
        </authorList>
    </citation>
    <scope>NUCLEOTIDE SEQUENCE [LARGE SCALE MRNA]</scope>
    <source>
        <tissue>Embryo</tissue>
    </source>
</reference>
<feature type="signal peptide" evidence="2">
    <location>
        <begin position="1"/>
        <end position="20"/>
    </location>
</feature>
<feature type="chain" id="PRO_0000305096" description="Glutamine amidotransferase-like class 1 domain-containing protein 1">
    <location>
        <begin position="21"/>
        <end position="213"/>
    </location>
</feature>
<proteinExistence type="evidence at transcript level"/>
<sequence>MTSKPTCLIVASAASAGVSARSFQQCFNLCNPVFNLQTATPGGKSIDFTGVDDSTGRWVQEFSIKPYANPAKLESIDGARYQALLIPDCPGAMNDLAHSGSLARILSHFISQQKPVCAVGQGVAALCCATEDQKWIFSRYSMTGPSVFELVRSSEFANLPLIVEDFIKDNGGSYTASIEDAVHVVLDRHLITGQNIQSTTAAVNNLILLCNNR</sequence>
<gene>
    <name evidence="1" type="primary">gatd1</name>
    <name evidence="3" type="synonym">pddc1</name>
    <name type="ORF">zgc:123196</name>
</gene>
<accession>Q3B7H1</accession>
<name>GALD1_DANRE</name>
<evidence type="ECO:0000250" key="1">
    <source>
        <dbReference type="UniProtKB" id="Q8NB37"/>
    </source>
</evidence>
<evidence type="ECO:0000255" key="2"/>
<evidence type="ECO:0000305" key="3"/>
<keyword id="KW-0967">Endosome</keyword>
<keyword id="KW-1185">Reference proteome</keyword>
<keyword id="KW-0964">Secreted</keyword>
<keyword id="KW-0732">Signal</keyword>
<protein>
    <recommendedName>
        <fullName>Glutamine amidotransferase-like class 1 domain-containing protein 1</fullName>
    </recommendedName>
    <alternativeName>
        <fullName>Ferry endosomal RAB5 effector complex subunit 5</fullName>
        <shortName evidence="1">Fy-5</shortName>
    </alternativeName>
    <alternativeName>
        <fullName>Parkinson disease 7 domain-containing protein 1</fullName>
    </alternativeName>
</protein>